<reference key="1">
    <citation type="journal article" date="1989" name="FEBS Lett.">
        <title>Trametes versicolor ligninase: isozyme sequence homology and substrate specificity.</title>
        <authorList>
            <person name="Joensson L.J."/>
            <person name="Karlsson O."/>
            <person name="Lundquist K."/>
            <person name="Nyman P.O."/>
        </authorList>
    </citation>
    <scope>PROTEIN SEQUENCE</scope>
</reference>
<keyword id="KW-0903">Direct protein sequencing</keyword>
<keyword id="KW-0349">Heme</keyword>
<keyword id="KW-0376">Hydrogen peroxide</keyword>
<keyword id="KW-0408">Iron</keyword>
<keyword id="KW-0439">Lignin degradation</keyword>
<keyword id="KW-0479">Metal-binding</keyword>
<keyword id="KW-0560">Oxidoreductase</keyword>
<keyword id="KW-0575">Peroxidase</keyword>
<dbReference type="EC" id="1.11.1.14" evidence="1"/>
<dbReference type="PIR" id="S04013">
    <property type="entry name" value="S04013"/>
</dbReference>
<dbReference type="UniPathway" id="UPA00892"/>
<dbReference type="GO" id="GO:0016690">
    <property type="term" value="F:diarylpropane peroxidase activity"/>
    <property type="evidence" value="ECO:0007669"/>
    <property type="project" value="UniProtKB-EC"/>
</dbReference>
<dbReference type="GO" id="GO:0046872">
    <property type="term" value="F:metal ion binding"/>
    <property type="evidence" value="ECO:0007669"/>
    <property type="project" value="UniProtKB-KW"/>
</dbReference>
<dbReference type="GO" id="GO:0042744">
    <property type="term" value="P:hydrogen peroxide catabolic process"/>
    <property type="evidence" value="ECO:0007669"/>
    <property type="project" value="UniProtKB-KW"/>
</dbReference>
<dbReference type="GO" id="GO:0046274">
    <property type="term" value="P:lignin catabolic process"/>
    <property type="evidence" value="ECO:0007669"/>
    <property type="project" value="UniProtKB-UniPathway"/>
</dbReference>
<organism>
    <name type="scientific">Trametes versicolor</name>
    <name type="common">White-rot fungus</name>
    <name type="synonym">Coriolus versicolor</name>
    <dbReference type="NCBI Taxonomy" id="5325"/>
    <lineage>
        <taxon>Eukaryota</taxon>
        <taxon>Fungi</taxon>
        <taxon>Dikarya</taxon>
        <taxon>Basidiomycota</taxon>
        <taxon>Agaricomycotina</taxon>
        <taxon>Agaricomycetes</taxon>
        <taxon>Polyporales</taxon>
        <taxon>Polyporaceae</taxon>
        <taxon>Trametes</taxon>
    </lineage>
</organism>
<accession>P20011</accession>
<feature type="chain" id="PRO_0000055612" description="Ligninase A">
    <location>
        <begin position="1"/>
        <end position="13" status="greater than"/>
    </location>
</feature>
<feature type="non-terminal residue">
    <location>
        <position position="13"/>
    </location>
</feature>
<evidence type="ECO:0000250" key="1">
    <source>
        <dbReference type="UniProtKB" id="P31837"/>
    </source>
</evidence>
<evidence type="ECO:0000305" key="2"/>
<protein>
    <recommendedName>
        <fullName>Ligninase A</fullName>
        <ecNumber evidence="1">1.11.1.14</ecNumber>
    </recommendedName>
    <alternativeName>
        <fullName>Diarylpropane peroxidase</fullName>
    </alternativeName>
    <alternativeName>
        <fullName>Lignin peroxidase</fullName>
    </alternativeName>
</protein>
<proteinExistence type="evidence at protein level"/>
<name>LIGA_TRAVE</name>
<sequence>VTXPDGKNTATNA</sequence>
<comment type="function">
    <text evidence="1">Depolymerization of lignin. Catalyzes the C(alpha)-C(beta) cleavage of the propyl side chains of lignin.</text>
</comment>
<comment type="catalytic activity">
    <reaction evidence="1">
        <text>1-(3,4-dimethoxyphenyl)-2-(2-methoxyphenoxy)propane-1,3-diol + H2O2 = 3,4-dimethoxybenzaldehyde + guaiacol + glycolaldehyde + H2O</text>
        <dbReference type="Rhea" id="RHEA:48004"/>
        <dbReference type="ChEBI" id="CHEBI:15377"/>
        <dbReference type="ChEBI" id="CHEBI:16240"/>
        <dbReference type="ChEBI" id="CHEBI:17071"/>
        <dbReference type="ChEBI" id="CHEBI:17098"/>
        <dbReference type="ChEBI" id="CHEBI:28591"/>
        <dbReference type="ChEBI" id="CHEBI:86963"/>
        <dbReference type="EC" id="1.11.1.14"/>
    </reaction>
</comment>
<comment type="catalytic activity">
    <reaction evidence="1">
        <text>2 (3,4-dimethoxyphenyl)methanol + H2O2 = 2 (3,4-dimethoxyphenyl)methanol radical + 2 H2O</text>
        <dbReference type="Rhea" id="RHEA:30271"/>
        <dbReference type="ChEBI" id="CHEBI:15377"/>
        <dbReference type="ChEBI" id="CHEBI:16240"/>
        <dbReference type="ChEBI" id="CHEBI:62150"/>
        <dbReference type="ChEBI" id="CHEBI:88143"/>
        <dbReference type="EC" id="1.11.1.14"/>
    </reaction>
</comment>
<comment type="pathway">
    <text>Secondary metabolite metabolism; lignin degradation.</text>
</comment>
<comment type="similarity">
    <text evidence="2">Belongs to the peroxidase family. Ligninase subfamily.</text>
</comment>